<dbReference type="EC" id="5.1.1.7" evidence="1"/>
<dbReference type="EMBL" id="CP001011">
    <property type="protein sequence ID" value="ACB92175.1"/>
    <property type="molecule type" value="Genomic_DNA"/>
</dbReference>
<dbReference type="RefSeq" id="WP_012382526.1">
    <property type="nucleotide sequence ID" value="NC_010577.1"/>
</dbReference>
<dbReference type="SMR" id="B2IA16"/>
<dbReference type="GeneID" id="93904478"/>
<dbReference type="KEGG" id="xfn:XfasM23_0734"/>
<dbReference type="HOGENOM" id="CLU_053306_1_1_6"/>
<dbReference type="UniPathway" id="UPA00034">
    <property type="reaction ID" value="UER00025"/>
</dbReference>
<dbReference type="Proteomes" id="UP000001698">
    <property type="component" value="Chromosome"/>
</dbReference>
<dbReference type="GO" id="GO:0005829">
    <property type="term" value="C:cytosol"/>
    <property type="evidence" value="ECO:0007669"/>
    <property type="project" value="TreeGrafter"/>
</dbReference>
<dbReference type="GO" id="GO:0008837">
    <property type="term" value="F:diaminopimelate epimerase activity"/>
    <property type="evidence" value="ECO:0007669"/>
    <property type="project" value="UniProtKB-UniRule"/>
</dbReference>
<dbReference type="GO" id="GO:0009089">
    <property type="term" value="P:lysine biosynthetic process via diaminopimelate"/>
    <property type="evidence" value="ECO:0007669"/>
    <property type="project" value="UniProtKB-UniRule"/>
</dbReference>
<dbReference type="Gene3D" id="3.10.310.10">
    <property type="entry name" value="Diaminopimelate Epimerase, Chain A, domain 1"/>
    <property type="match status" value="2"/>
</dbReference>
<dbReference type="HAMAP" id="MF_00197">
    <property type="entry name" value="DAP_epimerase"/>
    <property type="match status" value="1"/>
</dbReference>
<dbReference type="InterPro" id="IPR018510">
    <property type="entry name" value="DAP_epimerase_AS"/>
</dbReference>
<dbReference type="InterPro" id="IPR001653">
    <property type="entry name" value="DAP_epimerase_DapF"/>
</dbReference>
<dbReference type="NCBIfam" id="TIGR00652">
    <property type="entry name" value="DapF"/>
    <property type="match status" value="1"/>
</dbReference>
<dbReference type="PANTHER" id="PTHR31689:SF0">
    <property type="entry name" value="DIAMINOPIMELATE EPIMERASE"/>
    <property type="match status" value="1"/>
</dbReference>
<dbReference type="PANTHER" id="PTHR31689">
    <property type="entry name" value="DIAMINOPIMELATE EPIMERASE, CHLOROPLASTIC"/>
    <property type="match status" value="1"/>
</dbReference>
<dbReference type="Pfam" id="PF01678">
    <property type="entry name" value="DAP_epimerase"/>
    <property type="match status" value="2"/>
</dbReference>
<dbReference type="SUPFAM" id="SSF54506">
    <property type="entry name" value="Diaminopimelate epimerase-like"/>
    <property type="match status" value="2"/>
</dbReference>
<dbReference type="PROSITE" id="PS01326">
    <property type="entry name" value="DAP_EPIMERASE"/>
    <property type="match status" value="1"/>
</dbReference>
<proteinExistence type="inferred from homology"/>
<protein>
    <recommendedName>
        <fullName evidence="1">Diaminopimelate epimerase</fullName>
        <shortName evidence="1">DAP epimerase</shortName>
        <ecNumber evidence="1">5.1.1.7</ecNumber>
    </recommendedName>
    <alternativeName>
        <fullName evidence="1">PLP-independent amino acid racemase</fullName>
    </alternativeName>
</protein>
<keyword id="KW-0028">Amino-acid biosynthesis</keyword>
<keyword id="KW-0963">Cytoplasm</keyword>
<keyword id="KW-0413">Isomerase</keyword>
<keyword id="KW-0457">Lysine biosynthesis</keyword>
<feature type="chain" id="PRO_1000099272" description="Diaminopimelate epimerase">
    <location>
        <begin position="1"/>
        <end position="284"/>
    </location>
</feature>
<feature type="active site" description="Proton donor" evidence="1">
    <location>
        <position position="82"/>
    </location>
</feature>
<feature type="active site" description="Proton acceptor" evidence="1">
    <location>
        <position position="227"/>
    </location>
</feature>
<feature type="binding site" evidence="1">
    <location>
        <position position="20"/>
    </location>
    <ligand>
        <name>substrate</name>
    </ligand>
</feature>
<feature type="binding site" evidence="1">
    <location>
        <position position="53"/>
    </location>
    <ligand>
        <name>substrate</name>
    </ligand>
</feature>
<feature type="binding site" evidence="1">
    <location>
        <position position="73"/>
    </location>
    <ligand>
        <name>substrate</name>
    </ligand>
</feature>
<feature type="binding site" evidence="1">
    <location>
        <begin position="83"/>
        <end position="84"/>
    </location>
    <ligand>
        <name>substrate</name>
    </ligand>
</feature>
<feature type="binding site" evidence="1">
    <location>
        <position position="167"/>
    </location>
    <ligand>
        <name>substrate</name>
    </ligand>
</feature>
<feature type="binding site" evidence="1">
    <location>
        <position position="200"/>
    </location>
    <ligand>
        <name>substrate</name>
    </ligand>
</feature>
<feature type="binding site" evidence="1">
    <location>
        <begin position="218"/>
        <end position="219"/>
    </location>
    <ligand>
        <name>substrate</name>
    </ligand>
</feature>
<feature type="binding site" evidence="1">
    <location>
        <begin position="228"/>
        <end position="229"/>
    </location>
    <ligand>
        <name>substrate</name>
    </ligand>
</feature>
<feature type="site" description="Could be important to modulate the pK values of the two catalytic cysteine residues" evidence="1">
    <location>
        <position position="169"/>
    </location>
</feature>
<feature type="site" description="Could be important to modulate the pK values of the two catalytic cysteine residues" evidence="1">
    <location>
        <position position="218"/>
    </location>
</feature>
<feature type="site" description="Important for dimerization" evidence="1">
    <location>
        <position position="278"/>
    </location>
</feature>
<name>DAPF_XYLF2</name>
<comment type="function">
    <text evidence="1">Catalyzes the stereoinversion of LL-2,6-diaminopimelate (L,L-DAP) to meso-diaminopimelate (meso-DAP), a precursor of L-lysine and an essential component of the bacterial peptidoglycan.</text>
</comment>
<comment type="catalytic activity">
    <reaction evidence="1">
        <text>(2S,6S)-2,6-diaminopimelate = meso-2,6-diaminopimelate</text>
        <dbReference type="Rhea" id="RHEA:15393"/>
        <dbReference type="ChEBI" id="CHEBI:57609"/>
        <dbReference type="ChEBI" id="CHEBI:57791"/>
        <dbReference type="EC" id="5.1.1.7"/>
    </reaction>
</comment>
<comment type="pathway">
    <text evidence="1">Amino-acid biosynthesis; L-lysine biosynthesis via DAP pathway; DL-2,6-diaminopimelate from LL-2,6-diaminopimelate: step 1/1.</text>
</comment>
<comment type="subunit">
    <text evidence="1">Homodimer.</text>
</comment>
<comment type="subcellular location">
    <subcellularLocation>
        <location evidence="1">Cytoplasm</location>
    </subcellularLocation>
</comment>
<comment type="similarity">
    <text evidence="1">Belongs to the diaminopimelate epimerase family.</text>
</comment>
<evidence type="ECO:0000255" key="1">
    <source>
        <dbReference type="HAMAP-Rule" id="MF_00197"/>
    </source>
</evidence>
<gene>
    <name evidence="1" type="primary">dapF</name>
    <name type="ordered locus">XfasM23_0734</name>
</gene>
<organism>
    <name type="scientific">Xylella fastidiosa (strain M23)</name>
    <dbReference type="NCBI Taxonomy" id="405441"/>
    <lineage>
        <taxon>Bacteria</taxon>
        <taxon>Pseudomonadati</taxon>
        <taxon>Pseudomonadota</taxon>
        <taxon>Gammaproteobacteria</taxon>
        <taxon>Lysobacterales</taxon>
        <taxon>Lysobacteraceae</taxon>
        <taxon>Xylella</taxon>
    </lineage>
</organism>
<accession>B2IA16</accession>
<reference key="1">
    <citation type="journal article" date="2010" name="J. Bacteriol.">
        <title>Whole genome sequences of two Xylella fastidiosa strains (M12 and M23) causing almond leaf scorch disease in California.</title>
        <authorList>
            <person name="Chen J."/>
            <person name="Xie G."/>
            <person name="Han S."/>
            <person name="Chertkov O."/>
            <person name="Sims D."/>
            <person name="Civerolo E.L."/>
        </authorList>
    </citation>
    <scope>NUCLEOTIDE SEQUENCE [LARGE SCALE GENOMIC DNA]</scope>
    <source>
        <strain>M23</strain>
    </source>
</reference>
<sequence>MGVESVRCPLHFTKMQGAGNDFVVLDLRDGTPPPDAALVAWLADRHFGIGCDQVIAIEPPRGVGVFAAYRIWNADGSAAQQCGNGARCVAAWLVRDGSVATEHFLIDSPVQTHSVRCIGKDEYAVEMGLPVFEPERIPLSGFPNALGEYVLSLQGEVLCCGAVSMGNPHAVVEVDLIDVAPVERIGPLLQQHSAFPESVNVSFVQVIDPGLVRLRVYERGAGETLACGSGACAAAVVLMQRGRVGRDVRVVLPGGTLRVQWPVSGGPVTLSGPARCVFDGVWYG</sequence>